<organism>
    <name type="scientific">Aspergillus oryzae (strain ATCC 42149 / RIB 40)</name>
    <name type="common">Yellow koji mold</name>
    <dbReference type="NCBI Taxonomy" id="510516"/>
    <lineage>
        <taxon>Eukaryota</taxon>
        <taxon>Fungi</taxon>
        <taxon>Dikarya</taxon>
        <taxon>Ascomycota</taxon>
        <taxon>Pezizomycotina</taxon>
        <taxon>Eurotiomycetes</taxon>
        <taxon>Eurotiomycetidae</taxon>
        <taxon>Eurotiales</taxon>
        <taxon>Aspergillaceae</taxon>
        <taxon>Aspergillus</taxon>
        <taxon>Aspergillus subgen. Circumdati</taxon>
    </lineage>
</organism>
<sequence length="432" mass="45955">MQSKTFSVLSSCLLLIATVQGQLSGSVGPSTSISDKKAVKTCNVLDYGATNDNKTDVGQPIMNAFEDCGSGGVIYIPEGDYLIQEWVSLRNGTAFAIQLDGVIYRNGTTTSQGYMFGISGGSDFELYSSTSKGAIQGSGYLYHMNGEFTAPRLLHISDVSHWSVHDIALVDAPMFHFVIDDASNGEVYNMAIRGGNSGGLDGIDVSGDNIWIHDVMVTNKDECVTVKTGSHNFQIENIYCNWSGGCAMDSLGSGTNVSNIVYRNIYTWNSNQMYMIKSNGGDGEVSNLLFENFIGHGNAYSLDLDSEWSSMDTVDGDDGESRPPIRVICPEAIPCTDITIEDVDLWTEEGDSETYVCKNAFGSGACLKSDSSSTATYATTTTVTSAPSGYSATTMAADLTSAFGTDASIPIPTIPTSFYPGATPYSALAGSS</sequence>
<name>RHGE_ASPOR</name>
<keyword id="KW-0119">Carbohydrate metabolism</keyword>
<keyword id="KW-0961">Cell wall biogenesis/degradation</keyword>
<keyword id="KW-1015">Disulfide bond</keyword>
<keyword id="KW-0325">Glycoprotein</keyword>
<keyword id="KW-0326">Glycosidase</keyword>
<keyword id="KW-0378">Hydrolase</keyword>
<keyword id="KW-0624">Polysaccharide degradation</keyword>
<keyword id="KW-1185">Reference proteome</keyword>
<keyword id="KW-0964">Secreted</keyword>
<keyword id="KW-0732">Signal</keyword>
<evidence type="ECO:0000250" key="1"/>
<evidence type="ECO:0000255" key="2"/>
<evidence type="ECO:0000305" key="3"/>
<feature type="signal peptide" evidence="2">
    <location>
        <begin position="1"/>
        <end position="21"/>
    </location>
</feature>
<feature type="chain" id="PRO_0000394959" description="Probable rhamnogalacturonase E">
    <location>
        <begin position="22"/>
        <end position="432"/>
    </location>
</feature>
<feature type="active site" description="Proton donor" evidence="1">
    <location>
        <position position="221"/>
    </location>
</feature>
<feature type="active site" evidence="1">
    <location>
        <position position="296"/>
    </location>
</feature>
<feature type="glycosylation site" description="N-linked (GlcNAc...) asparagine" evidence="2">
    <location>
        <position position="53"/>
    </location>
</feature>
<feature type="glycosylation site" description="N-linked (GlcNAc...) asparagine" evidence="2">
    <location>
        <position position="91"/>
    </location>
</feature>
<feature type="glycosylation site" description="N-linked (GlcNAc...) asparagine" evidence="2">
    <location>
        <position position="106"/>
    </location>
</feature>
<feature type="glycosylation site" description="N-linked (GlcNAc...) asparagine" evidence="2">
    <location>
        <position position="241"/>
    </location>
</feature>
<feature type="glycosylation site" description="N-linked (GlcNAc...) asparagine" evidence="2">
    <location>
        <position position="256"/>
    </location>
</feature>
<feature type="disulfide bond" evidence="1">
    <location>
        <begin position="42"/>
        <end position="68"/>
    </location>
</feature>
<feature type="disulfide bond" evidence="1">
    <location>
        <begin position="223"/>
        <end position="240"/>
    </location>
</feature>
<feature type="disulfide bond" evidence="1">
    <location>
        <begin position="329"/>
        <end position="335"/>
    </location>
</feature>
<feature type="disulfide bond" evidence="1">
    <location>
        <begin position="357"/>
        <end position="366"/>
    </location>
</feature>
<proteinExistence type="inferred from homology"/>
<gene>
    <name type="primary">rhgE</name>
    <name type="ORF">AO090124000009</name>
</gene>
<accession>Q2U7A4</accession>
<protein>
    <recommendedName>
        <fullName>Probable rhamnogalacturonase E</fullName>
        <shortName>RGase E</shortName>
        <shortName>RHG E</shortName>
        <ecNumber>3.2.1.-</ecNumber>
    </recommendedName>
</protein>
<dbReference type="EC" id="3.2.1.-"/>
<dbReference type="EMBL" id="BA000053">
    <property type="protein sequence ID" value="BAE62561.1"/>
    <property type="molecule type" value="Genomic_DNA"/>
</dbReference>
<dbReference type="RefSeq" id="XP_001823694.1">
    <property type="nucleotide sequence ID" value="XM_001823642.1"/>
</dbReference>
<dbReference type="SMR" id="Q2U7A4"/>
<dbReference type="STRING" id="510516.Q2U7A4"/>
<dbReference type="CAZy" id="GH28">
    <property type="family name" value="Glycoside Hydrolase Family 28"/>
</dbReference>
<dbReference type="GlyCosmos" id="Q2U7A4">
    <property type="glycosylation" value="5 sites, No reported glycans"/>
</dbReference>
<dbReference type="EnsemblFungi" id="BAE62561">
    <property type="protein sequence ID" value="BAE62561"/>
    <property type="gene ID" value="AO090124000009"/>
</dbReference>
<dbReference type="GeneID" id="5995765"/>
<dbReference type="KEGG" id="aor:AO090124000009"/>
<dbReference type="VEuPathDB" id="FungiDB:AO090124000009"/>
<dbReference type="HOGENOM" id="CLU_016031_7_2_1"/>
<dbReference type="OMA" id="MFHFVID"/>
<dbReference type="OrthoDB" id="108300at5052"/>
<dbReference type="Proteomes" id="UP000006564">
    <property type="component" value="Chromosome 5"/>
</dbReference>
<dbReference type="GO" id="GO:0005576">
    <property type="term" value="C:extracellular region"/>
    <property type="evidence" value="ECO:0007669"/>
    <property type="project" value="UniProtKB-SubCell"/>
</dbReference>
<dbReference type="GO" id="GO:0004650">
    <property type="term" value="F:polygalacturonase activity"/>
    <property type="evidence" value="ECO:0007669"/>
    <property type="project" value="InterPro"/>
</dbReference>
<dbReference type="GO" id="GO:0046576">
    <property type="term" value="F:rhamnogalacturonan alpha-L-rhamnopyranosyl-(1-&gt;4)-alpha-D-galactopyranosyluronide lyase activity"/>
    <property type="evidence" value="ECO:0007669"/>
    <property type="project" value="UniProtKB-ARBA"/>
</dbReference>
<dbReference type="GO" id="GO:0071555">
    <property type="term" value="P:cell wall organization"/>
    <property type="evidence" value="ECO:0007669"/>
    <property type="project" value="UniProtKB-KW"/>
</dbReference>
<dbReference type="GO" id="GO:0000272">
    <property type="term" value="P:polysaccharide catabolic process"/>
    <property type="evidence" value="ECO:0007669"/>
    <property type="project" value="UniProtKB-KW"/>
</dbReference>
<dbReference type="Gene3D" id="2.160.20.10">
    <property type="entry name" value="Single-stranded right-handed beta-helix, Pectin lyase-like"/>
    <property type="match status" value="1"/>
</dbReference>
<dbReference type="InterPro" id="IPR000743">
    <property type="entry name" value="Glyco_hydro_28"/>
</dbReference>
<dbReference type="InterPro" id="IPR012334">
    <property type="entry name" value="Pectin_lyas_fold"/>
</dbReference>
<dbReference type="InterPro" id="IPR011050">
    <property type="entry name" value="Pectin_lyase_fold/virulence"/>
</dbReference>
<dbReference type="PANTHER" id="PTHR31736">
    <property type="match status" value="1"/>
</dbReference>
<dbReference type="PANTHER" id="PTHR31736:SF19">
    <property type="entry name" value="PECTIN LYASE SUPERFAMILY PROTEIN-RELATED"/>
    <property type="match status" value="1"/>
</dbReference>
<dbReference type="Pfam" id="PF00295">
    <property type="entry name" value="Glyco_hydro_28"/>
    <property type="match status" value="1"/>
</dbReference>
<dbReference type="SUPFAM" id="SSF51126">
    <property type="entry name" value="Pectin lyase-like"/>
    <property type="match status" value="1"/>
</dbReference>
<comment type="function">
    <text evidence="1">Pectinolytic enzymes consist of four classes of enzymes: pectine lyase, polygalacturonase, pectin methylesterase and rhamnogalacturonase. Hydrolyzes alpha-D-galacturonopyranosyl-(1,2)-alpha-L-rhamnopyranosyl linkages in the backbone of the hairy regions of pectins (By similarity).</text>
</comment>
<comment type="subcellular location">
    <subcellularLocation>
        <location evidence="1">Secreted</location>
    </subcellularLocation>
</comment>
<comment type="similarity">
    <text evidence="3">Belongs to the glycosyl hydrolase 28 family.</text>
</comment>
<reference key="1">
    <citation type="journal article" date="2005" name="Nature">
        <title>Genome sequencing and analysis of Aspergillus oryzae.</title>
        <authorList>
            <person name="Machida M."/>
            <person name="Asai K."/>
            <person name="Sano M."/>
            <person name="Tanaka T."/>
            <person name="Kumagai T."/>
            <person name="Terai G."/>
            <person name="Kusumoto K."/>
            <person name="Arima T."/>
            <person name="Akita O."/>
            <person name="Kashiwagi Y."/>
            <person name="Abe K."/>
            <person name="Gomi K."/>
            <person name="Horiuchi H."/>
            <person name="Kitamoto K."/>
            <person name="Kobayashi T."/>
            <person name="Takeuchi M."/>
            <person name="Denning D.W."/>
            <person name="Galagan J.E."/>
            <person name="Nierman W.C."/>
            <person name="Yu J."/>
            <person name="Archer D.B."/>
            <person name="Bennett J.W."/>
            <person name="Bhatnagar D."/>
            <person name="Cleveland T.E."/>
            <person name="Fedorova N.D."/>
            <person name="Gotoh O."/>
            <person name="Horikawa H."/>
            <person name="Hosoyama A."/>
            <person name="Ichinomiya M."/>
            <person name="Igarashi R."/>
            <person name="Iwashita K."/>
            <person name="Juvvadi P.R."/>
            <person name="Kato M."/>
            <person name="Kato Y."/>
            <person name="Kin T."/>
            <person name="Kokubun A."/>
            <person name="Maeda H."/>
            <person name="Maeyama N."/>
            <person name="Maruyama J."/>
            <person name="Nagasaki H."/>
            <person name="Nakajima T."/>
            <person name="Oda K."/>
            <person name="Okada K."/>
            <person name="Paulsen I."/>
            <person name="Sakamoto K."/>
            <person name="Sawano T."/>
            <person name="Takahashi M."/>
            <person name="Takase K."/>
            <person name="Terabayashi Y."/>
            <person name="Wortman J.R."/>
            <person name="Yamada O."/>
            <person name="Yamagata Y."/>
            <person name="Anazawa H."/>
            <person name="Hata Y."/>
            <person name="Koide Y."/>
            <person name="Komori T."/>
            <person name="Koyama Y."/>
            <person name="Minetoki T."/>
            <person name="Suharnan S."/>
            <person name="Tanaka A."/>
            <person name="Isono K."/>
            <person name="Kuhara S."/>
            <person name="Ogasawara N."/>
            <person name="Kikuchi H."/>
        </authorList>
    </citation>
    <scope>NUCLEOTIDE SEQUENCE [LARGE SCALE GENOMIC DNA]</scope>
    <source>
        <strain>ATCC 42149 / RIB 40</strain>
    </source>
</reference>